<comment type="function">
    <text evidence="1">Catalyzes the conversion of S-adenosyl-L-methionine (SAM) to carboxy-S-adenosyl-L-methionine (Cx-SAM).</text>
</comment>
<comment type="catalytic activity">
    <reaction evidence="1">
        <text>prephenate + S-adenosyl-L-methionine = carboxy-S-adenosyl-L-methionine + 3-phenylpyruvate + H2O</text>
        <dbReference type="Rhea" id="RHEA:51692"/>
        <dbReference type="ChEBI" id="CHEBI:15377"/>
        <dbReference type="ChEBI" id="CHEBI:18005"/>
        <dbReference type="ChEBI" id="CHEBI:29934"/>
        <dbReference type="ChEBI" id="CHEBI:59789"/>
        <dbReference type="ChEBI" id="CHEBI:134278"/>
    </reaction>
</comment>
<comment type="subunit">
    <text evidence="1">Homodimer.</text>
</comment>
<comment type="similarity">
    <text evidence="1">Belongs to the class I-like SAM-binding methyltransferase superfamily. Cx-SAM synthase family.</text>
</comment>
<sequence length="242" mass="27560">MSKTDNIYSKRRAQIDGFSFDEQVVQVFPDMIKRSVPGYETIINSIGTITERCAVENSNLYDLGCSLGAATLSMRRGLNKAGCQIIAVDNSQQMVERCEQYIHAYKSDTPVQVLCDDICNIHIENASVVILNFTLQFLTPEKRLNLLTNIYNGLLPGGVLVLSEKFVFEDPLNHQLLNDLHLDFKRSQGYSELEISQKRASLDNVLIADTVEQHYLRLRKAGFKHNNLWYQYFNFGSIISIK</sequence>
<dbReference type="EC" id="2.1.3.-" evidence="1"/>
<dbReference type="EMBL" id="CP000510">
    <property type="protein sequence ID" value="ABM02550.1"/>
    <property type="molecule type" value="Genomic_DNA"/>
</dbReference>
<dbReference type="RefSeq" id="WP_011769109.1">
    <property type="nucleotide sequence ID" value="NC_008709.1"/>
</dbReference>
<dbReference type="SMR" id="A1SST5"/>
<dbReference type="STRING" id="357804.Ping_0698"/>
<dbReference type="KEGG" id="pin:Ping_0698"/>
<dbReference type="eggNOG" id="COG2226">
    <property type="taxonomic scope" value="Bacteria"/>
</dbReference>
<dbReference type="HOGENOM" id="CLU_078475_0_0_6"/>
<dbReference type="OrthoDB" id="9779941at2"/>
<dbReference type="Proteomes" id="UP000000639">
    <property type="component" value="Chromosome"/>
</dbReference>
<dbReference type="GO" id="GO:0016743">
    <property type="term" value="F:carboxyl- or carbamoyltransferase activity"/>
    <property type="evidence" value="ECO:0007669"/>
    <property type="project" value="UniProtKB-UniRule"/>
</dbReference>
<dbReference type="GO" id="GO:1904047">
    <property type="term" value="F:S-adenosyl-L-methionine binding"/>
    <property type="evidence" value="ECO:0007669"/>
    <property type="project" value="UniProtKB-UniRule"/>
</dbReference>
<dbReference type="GO" id="GO:0002098">
    <property type="term" value="P:tRNA wobble uridine modification"/>
    <property type="evidence" value="ECO:0007669"/>
    <property type="project" value="InterPro"/>
</dbReference>
<dbReference type="CDD" id="cd02440">
    <property type="entry name" value="AdoMet_MTases"/>
    <property type="match status" value="1"/>
</dbReference>
<dbReference type="Gene3D" id="3.40.50.150">
    <property type="entry name" value="Vaccinia Virus protein VP39"/>
    <property type="match status" value="1"/>
</dbReference>
<dbReference type="HAMAP" id="MF_01589">
    <property type="entry name" value="Cx_SAM_synthase"/>
    <property type="match status" value="1"/>
</dbReference>
<dbReference type="InterPro" id="IPR005271">
    <property type="entry name" value="CmoA"/>
</dbReference>
<dbReference type="InterPro" id="IPR041698">
    <property type="entry name" value="Methyltransf_25"/>
</dbReference>
<dbReference type="InterPro" id="IPR029063">
    <property type="entry name" value="SAM-dependent_MTases_sf"/>
</dbReference>
<dbReference type="NCBIfam" id="TIGR00740">
    <property type="entry name" value="carboxy-S-adenosyl-L-methionine synthase CmoA"/>
    <property type="match status" value="1"/>
</dbReference>
<dbReference type="NCBIfam" id="NF011995">
    <property type="entry name" value="PRK15451.1"/>
    <property type="match status" value="1"/>
</dbReference>
<dbReference type="PANTHER" id="PTHR43861:SF2">
    <property type="entry name" value="CARBOXY-S-ADENOSYL-L-METHIONINE SYNTHASE"/>
    <property type="match status" value="1"/>
</dbReference>
<dbReference type="PANTHER" id="PTHR43861">
    <property type="entry name" value="TRANS-ACONITATE 2-METHYLTRANSFERASE-RELATED"/>
    <property type="match status" value="1"/>
</dbReference>
<dbReference type="Pfam" id="PF13649">
    <property type="entry name" value="Methyltransf_25"/>
    <property type="match status" value="1"/>
</dbReference>
<dbReference type="PIRSF" id="PIRSF006325">
    <property type="entry name" value="MeTrfase_bac"/>
    <property type="match status" value="1"/>
</dbReference>
<dbReference type="SUPFAM" id="SSF53335">
    <property type="entry name" value="S-adenosyl-L-methionine-dependent methyltransferases"/>
    <property type="match status" value="1"/>
</dbReference>
<keyword id="KW-1185">Reference proteome</keyword>
<keyword id="KW-0949">S-adenosyl-L-methionine</keyword>
<keyword id="KW-0808">Transferase</keyword>
<organism>
    <name type="scientific">Psychromonas ingrahamii (strain DSM 17664 / CCUG 51855 / 37)</name>
    <dbReference type="NCBI Taxonomy" id="357804"/>
    <lineage>
        <taxon>Bacteria</taxon>
        <taxon>Pseudomonadati</taxon>
        <taxon>Pseudomonadota</taxon>
        <taxon>Gammaproteobacteria</taxon>
        <taxon>Alteromonadales</taxon>
        <taxon>Psychromonadaceae</taxon>
        <taxon>Psychromonas</taxon>
    </lineage>
</organism>
<feature type="chain" id="PRO_0000314368" description="Carboxy-S-adenosyl-L-methionine synthase">
    <location>
        <begin position="1"/>
        <end position="242"/>
    </location>
</feature>
<feature type="binding site" evidence="1">
    <location>
        <position position="39"/>
    </location>
    <ligand>
        <name>S-adenosyl-L-methionine</name>
        <dbReference type="ChEBI" id="CHEBI:59789"/>
    </ligand>
</feature>
<feature type="binding site" evidence="1">
    <location>
        <begin position="64"/>
        <end position="66"/>
    </location>
    <ligand>
        <name>S-adenosyl-L-methionine</name>
        <dbReference type="ChEBI" id="CHEBI:59789"/>
    </ligand>
</feature>
<feature type="binding site" evidence="1">
    <location>
        <begin position="89"/>
        <end position="90"/>
    </location>
    <ligand>
        <name>S-adenosyl-L-methionine</name>
        <dbReference type="ChEBI" id="CHEBI:59789"/>
    </ligand>
</feature>
<feature type="binding site" evidence="1">
    <location>
        <begin position="117"/>
        <end position="118"/>
    </location>
    <ligand>
        <name>S-adenosyl-L-methionine</name>
        <dbReference type="ChEBI" id="CHEBI:59789"/>
    </ligand>
</feature>
<feature type="binding site" evidence="1">
    <location>
        <position position="132"/>
    </location>
    <ligand>
        <name>S-adenosyl-L-methionine</name>
        <dbReference type="ChEBI" id="CHEBI:59789"/>
    </ligand>
</feature>
<feature type="binding site" evidence="1">
    <location>
        <position position="199"/>
    </location>
    <ligand>
        <name>S-adenosyl-L-methionine</name>
        <dbReference type="ChEBI" id="CHEBI:59789"/>
    </ligand>
</feature>
<name>CMOA_PSYIN</name>
<protein>
    <recommendedName>
        <fullName evidence="1">Carboxy-S-adenosyl-L-methionine synthase</fullName>
        <shortName evidence="1">Cx-SAM synthase</shortName>
        <ecNumber evidence="1">2.1.3.-</ecNumber>
    </recommendedName>
</protein>
<reference key="1">
    <citation type="journal article" date="2008" name="BMC Genomics">
        <title>Genomics of an extreme psychrophile, Psychromonas ingrahamii.</title>
        <authorList>
            <person name="Riley M."/>
            <person name="Staley J.T."/>
            <person name="Danchin A."/>
            <person name="Wang T.Z."/>
            <person name="Brettin T.S."/>
            <person name="Hauser L.J."/>
            <person name="Land M.L."/>
            <person name="Thompson L.S."/>
        </authorList>
    </citation>
    <scope>NUCLEOTIDE SEQUENCE [LARGE SCALE GENOMIC DNA]</scope>
    <source>
        <strain>DSM 17664 / CCUG 51855 / 37</strain>
    </source>
</reference>
<gene>
    <name evidence="1" type="primary">cmoA</name>
    <name type="ordered locus">Ping_0698</name>
</gene>
<evidence type="ECO:0000255" key="1">
    <source>
        <dbReference type="HAMAP-Rule" id="MF_01589"/>
    </source>
</evidence>
<proteinExistence type="inferred from homology"/>
<accession>A1SST5</accession>